<proteinExistence type="evidence at protein level"/>
<reference key="1">
    <citation type="journal article" date="2004" name="Nucleic Acids Res.">
        <title>Thermoadaptation trait revealed by the genome sequence of thermophilic Geobacillus kaustophilus.</title>
        <authorList>
            <person name="Takami H."/>
            <person name="Takaki Y."/>
            <person name="Chee G.-J."/>
            <person name="Nishi S."/>
            <person name="Shimamura S."/>
            <person name="Suzuki H."/>
            <person name="Matsui S."/>
            <person name="Uchiyama I."/>
        </authorList>
    </citation>
    <scope>NUCLEOTIDE SEQUENCE [LARGE SCALE GENOMIC DNA]</scope>
    <source>
        <strain>HTA426</strain>
    </source>
</reference>
<gene>
    <name evidence="1" type="primary">tilS</name>
    <name type="ordered locus">GK0060</name>
</gene>
<dbReference type="EC" id="6.3.4.19" evidence="1"/>
<dbReference type="EMBL" id="BA000043">
    <property type="protein sequence ID" value="BAD74345.1"/>
    <property type="molecule type" value="Genomic_DNA"/>
</dbReference>
<dbReference type="RefSeq" id="WP_011229575.1">
    <property type="nucleotide sequence ID" value="NC_006510.1"/>
</dbReference>
<dbReference type="PDB" id="3A2K">
    <property type="method" value="X-ray"/>
    <property type="resolution" value="3.65 A"/>
    <property type="chains" value="A/B=1-464"/>
</dbReference>
<dbReference type="PDB" id="3HJ7">
    <property type="method" value="X-ray"/>
    <property type="resolution" value="2.20 A"/>
    <property type="chains" value="A=332-464"/>
</dbReference>
<dbReference type="PDBsum" id="3A2K"/>
<dbReference type="PDBsum" id="3HJ7"/>
<dbReference type="SMR" id="Q5L3T3"/>
<dbReference type="DIP" id="DIP-59287N"/>
<dbReference type="STRING" id="235909.GK0060"/>
<dbReference type="KEGG" id="gka:GK0060"/>
<dbReference type="eggNOG" id="COG0037">
    <property type="taxonomic scope" value="Bacteria"/>
</dbReference>
<dbReference type="HOGENOM" id="CLU_018869_0_1_9"/>
<dbReference type="BRENDA" id="6.3.4.19">
    <property type="organism ID" value="8138"/>
</dbReference>
<dbReference type="EvolutionaryTrace" id="Q5L3T3"/>
<dbReference type="Proteomes" id="UP000001172">
    <property type="component" value="Chromosome"/>
</dbReference>
<dbReference type="GO" id="GO:0005737">
    <property type="term" value="C:cytoplasm"/>
    <property type="evidence" value="ECO:0007669"/>
    <property type="project" value="UniProtKB-SubCell"/>
</dbReference>
<dbReference type="GO" id="GO:0005524">
    <property type="term" value="F:ATP binding"/>
    <property type="evidence" value="ECO:0007669"/>
    <property type="project" value="UniProtKB-UniRule"/>
</dbReference>
<dbReference type="GO" id="GO:0032267">
    <property type="term" value="F:tRNA(Ile)-lysidine synthase activity"/>
    <property type="evidence" value="ECO:0007669"/>
    <property type="project" value="UniProtKB-EC"/>
</dbReference>
<dbReference type="GO" id="GO:0006400">
    <property type="term" value="P:tRNA modification"/>
    <property type="evidence" value="ECO:0007669"/>
    <property type="project" value="UniProtKB-UniRule"/>
</dbReference>
<dbReference type="CDD" id="cd01992">
    <property type="entry name" value="TilS_N"/>
    <property type="match status" value="1"/>
</dbReference>
<dbReference type="Gene3D" id="3.30.465.60">
    <property type="match status" value="1"/>
</dbReference>
<dbReference type="Gene3D" id="3.40.50.620">
    <property type="entry name" value="HUPs"/>
    <property type="match status" value="1"/>
</dbReference>
<dbReference type="Gene3D" id="1.10.10.1360">
    <property type="entry name" value="tRNA (Ile)-lysidine synthase"/>
    <property type="match status" value="1"/>
</dbReference>
<dbReference type="HAMAP" id="MF_01161">
    <property type="entry name" value="tRNA_Ile_lys_synt"/>
    <property type="match status" value="1"/>
</dbReference>
<dbReference type="InterPro" id="IPR012796">
    <property type="entry name" value="Lysidine-tRNA-synth_C"/>
</dbReference>
<dbReference type="InterPro" id="IPR014729">
    <property type="entry name" value="Rossmann-like_a/b/a_fold"/>
</dbReference>
<dbReference type="InterPro" id="IPR011063">
    <property type="entry name" value="TilS/TtcA_N"/>
</dbReference>
<dbReference type="InterPro" id="IPR012094">
    <property type="entry name" value="tRNA_Ile_lys_synt"/>
</dbReference>
<dbReference type="InterPro" id="IPR012795">
    <property type="entry name" value="tRNA_Ile_lys_synt_N"/>
</dbReference>
<dbReference type="InterPro" id="IPR015262">
    <property type="entry name" value="tRNA_Ile_lys_synt_subst-bd"/>
</dbReference>
<dbReference type="NCBIfam" id="TIGR02433">
    <property type="entry name" value="lysidine_TilS_C"/>
    <property type="match status" value="1"/>
</dbReference>
<dbReference type="NCBIfam" id="TIGR02432">
    <property type="entry name" value="lysidine_TilS_N"/>
    <property type="match status" value="1"/>
</dbReference>
<dbReference type="PANTHER" id="PTHR43033">
    <property type="entry name" value="TRNA(ILE)-LYSIDINE SYNTHASE-RELATED"/>
    <property type="match status" value="1"/>
</dbReference>
<dbReference type="PANTHER" id="PTHR43033:SF1">
    <property type="entry name" value="TRNA(ILE)-LYSIDINE SYNTHASE-RELATED"/>
    <property type="match status" value="1"/>
</dbReference>
<dbReference type="Pfam" id="PF01171">
    <property type="entry name" value="ATP_bind_3"/>
    <property type="match status" value="1"/>
</dbReference>
<dbReference type="Pfam" id="PF09179">
    <property type="entry name" value="TilS"/>
    <property type="match status" value="1"/>
</dbReference>
<dbReference type="Pfam" id="PF11734">
    <property type="entry name" value="TilS_C"/>
    <property type="match status" value="1"/>
</dbReference>
<dbReference type="SMART" id="SM00977">
    <property type="entry name" value="TilS_C"/>
    <property type="match status" value="1"/>
</dbReference>
<dbReference type="SUPFAM" id="SSF52402">
    <property type="entry name" value="Adenine nucleotide alpha hydrolases-like"/>
    <property type="match status" value="1"/>
</dbReference>
<dbReference type="SUPFAM" id="SSF82829">
    <property type="entry name" value="MesJ substrate recognition domain-like"/>
    <property type="match status" value="1"/>
</dbReference>
<dbReference type="SUPFAM" id="SSF56037">
    <property type="entry name" value="PheT/TilS domain"/>
    <property type="match status" value="1"/>
</dbReference>
<protein>
    <recommendedName>
        <fullName evidence="1">tRNA(Ile)-lysidine synthase</fullName>
        <ecNumber evidence="1">6.3.4.19</ecNumber>
    </recommendedName>
    <alternativeName>
        <fullName evidence="1">tRNA(Ile)-2-lysyl-cytidine synthase</fullName>
    </alternativeName>
    <alternativeName>
        <fullName evidence="1">tRNA(Ile)-lysidine synthetase</fullName>
    </alternativeName>
</protein>
<organism>
    <name type="scientific">Geobacillus kaustophilus (strain HTA426)</name>
    <dbReference type="NCBI Taxonomy" id="235909"/>
    <lineage>
        <taxon>Bacteria</taxon>
        <taxon>Bacillati</taxon>
        <taxon>Bacillota</taxon>
        <taxon>Bacilli</taxon>
        <taxon>Bacillales</taxon>
        <taxon>Anoxybacillaceae</taxon>
        <taxon>Geobacillus</taxon>
        <taxon>Geobacillus thermoleovorans group</taxon>
    </lineage>
</organism>
<keyword id="KW-0002">3D-structure</keyword>
<keyword id="KW-0067">ATP-binding</keyword>
<keyword id="KW-0963">Cytoplasm</keyword>
<keyword id="KW-0436">Ligase</keyword>
<keyword id="KW-0547">Nucleotide-binding</keyword>
<keyword id="KW-1185">Reference proteome</keyword>
<keyword id="KW-0819">tRNA processing</keyword>
<feature type="chain" id="PRO_0000181696" description="tRNA(Ile)-lysidine synthase">
    <location>
        <begin position="1"/>
        <end position="464"/>
    </location>
</feature>
<feature type="binding site" evidence="1">
    <location>
        <begin position="26"/>
        <end position="31"/>
    </location>
    <ligand>
        <name>ATP</name>
        <dbReference type="ChEBI" id="CHEBI:30616"/>
    </ligand>
</feature>
<feature type="strand" evidence="2">
    <location>
        <begin position="338"/>
        <end position="341"/>
    </location>
</feature>
<feature type="strand" evidence="2">
    <location>
        <begin position="343"/>
        <end position="348"/>
    </location>
</feature>
<feature type="strand" evidence="2">
    <location>
        <begin position="352"/>
        <end position="362"/>
    </location>
</feature>
<feature type="strand" evidence="2">
    <location>
        <begin position="372"/>
        <end position="375"/>
    </location>
</feature>
<feature type="helix" evidence="2">
    <location>
        <begin position="377"/>
        <end position="379"/>
    </location>
</feature>
<feature type="strand" evidence="2">
    <location>
        <begin position="382"/>
        <end position="387"/>
    </location>
</feature>
<feature type="strand" evidence="2">
    <location>
        <begin position="394"/>
        <end position="398"/>
    </location>
</feature>
<feature type="strand" evidence="2">
    <location>
        <begin position="403"/>
        <end position="405"/>
    </location>
</feature>
<feature type="helix" evidence="2">
    <location>
        <begin position="406"/>
        <end position="412"/>
    </location>
</feature>
<feature type="helix" evidence="2">
    <location>
        <begin position="417"/>
        <end position="420"/>
    </location>
</feature>
<feature type="strand" evidence="2">
    <location>
        <begin position="425"/>
        <end position="427"/>
    </location>
</feature>
<feature type="strand" evidence="2">
    <location>
        <begin position="433"/>
        <end position="436"/>
    </location>
</feature>
<feature type="turn" evidence="2">
    <location>
        <begin position="437"/>
        <end position="439"/>
    </location>
</feature>
<feature type="strand" evidence="2">
    <location>
        <begin position="440"/>
        <end position="442"/>
    </location>
</feature>
<feature type="strand" evidence="2">
    <location>
        <begin position="454"/>
        <end position="462"/>
    </location>
</feature>
<comment type="function">
    <text evidence="1">Ligates lysine onto the cytidine present at position 34 of the AUA codon-specific tRNA(Ile) that contains the anticodon CAU, in an ATP-dependent manner. Cytidine is converted to lysidine, thus changing the amino acid specificity of the tRNA from methionine to isoleucine.</text>
</comment>
<comment type="catalytic activity">
    <reaction evidence="1">
        <text>cytidine(34) in tRNA(Ile2) + L-lysine + ATP = lysidine(34) in tRNA(Ile2) + AMP + diphosphate + H(+)</text>
        <dbReference type="Rhea" id="RHEA:43744"/>
        <dbReference type="Rhea" id="RHEA-COMP:10625"/>
        <dbReference type="Rhea" id="RHEA-COMP:10670"/>
        <dbReference type="ChEBI" id="CHEBI:15378"/>
        <dbReference type="ChEBI" id="CHEBI:30616"/>
        <dbReference type="ChEBI" id="CHEBI:32551"/>
        <dbReference type="ChEBI" id="CHEBI:33019"/>
        <dbReference type="ChEBI" id="CHEBI:82748"/>
        <dbReference type="ChEBI" id="CHEBI:83665"/>
        <dbReference type="ChEBI" id="CHEBI:456215"/>
        <dbReference type="EC" id="6.3.4.19"/>
    </reaction>
</comment>
<comment type="subcellular location">
    <subcellularLocation>
        <location evidence="1">Cytoplasm</location>
    </subcellularLocation>
</comment>
<comment type="domain">
    <text>The N-terminal region contains the highly conserved SGGXDS motif, predicted to be a P-loop motif involved in ATP binding.</text>
</comment>
<comment type="similarity">
    <text evidence="1">Belongs to the tRNA(Ile)-lysidine synthase family.</text>
</comment>
<sequence length="464" mass="53105">MIDKVRAFIHRHQLLSEGAAVIVGVSGGPDSLALLHVFLSLRDEWKLQVIAAHVDHMFRGRESEEEMEFVKRFCVERRILCETAQIDVPAFQRSAGLGAQEAARICRYRFFAELMEKHQAGYVAVGHHGDDQVETILMRLVRGSTSKGYAGIPVKRPFHGGYLIRPFLAVSRAEIEAYCRQMGLSPRCDPSNEKDDYTRNRFRHHIVPLLRQENPRLHERFQQYSEMMAEDEQFLEELAADALNKVMEKQHRDAALSIGPFLELPRPLQRRVLQLLLLRLYGGVPPTLTSVHIGHILMLCERGRPSGMIDLPKGLKVIRSYDRCLFTFDAESGEKGYWFELPVPALLPLPNGYAIISEFGEHYPRKQAGNDWFVVDPASVSLPLRVRTRRRGDRMVLKGTGGTKKLKEIFIEAKIPRMERDRWPIVEDADGRILWVPGLKKSAFEAQNRGQARYILLQYQAMNS</sequence>
<accession>Q5L3T3</accession>
<evidence type="ECO:0000255" key="1">
    <source>
        <dbReference type="HAMAP-Rule" id="MF_01161"/>
    </source>
</evidence>
<evidence type="ECO:0007829" key="2">
    <source>
        <dbReference type="PDB" id="3HJ7"/>
    </source>
</evidence>
<name>TILS_GEOKA</name>